<organism>
    <name type="scientific">Rhizobium etli (strain CIAT 652)</name>
    <dbReference type="NCBI Taxonomy" id="491916"/>
    <lineage>
        <taxon>Bacteria</taxon>
        <taxon>Pseudomonadati</taxon>
        <taxon>Pseudomonadota</taxon>
        <taxon>Alphaproteobacteria</taxon>
        <taxon>Hyphomicrobiales</taxon>
        <taxon>Rhizobiaceae</taxon>
        <taxon>Rhizobium/Agrobacterium group</taxon>
        <taxon>Rhizobium</taxon>
    </lineage>
</organism>
<gene>
    <name evidence="1" type="primary">nuoC1</name>
    <name type="ordered locus">RHECIAT_CH0001677</name>
</gene>
<dbReference type="EC" id="7.1.1.-" evidence="1"/>
<dbReference type="EMBL" id="CP001074">
    <property type="protein sequence ID" value="ACE90651.1"/>
    <property type="molecule type" value="Genomic_DNA"/>
</dbReference>
<dbReference type="SMR" id="B3PVZ9"/>
<dbReference type="KEGG" id="rec:RHECIAT_CH0001677"/>
<dbReference type="eggNOG" id="COG0852">
    <property type="taxonomic scope" value="Bacteria"/>
</dbReference>
<dbReference type="HOGENOM" id="CLU_042628_2_1_5"/>
<dbReference type="Proteomes" id="UP000008817">
    <property type="component" value="Chromosome"/>
</dbReference>
<dbReference type="GO" id="GO:0005886">
    <property type="term" value="C:plasma membrane"/>
    <property type="evidence" value="ECO:0007669"/>
    <property type="project" value="UniProtKB-SubCell"/>
</dbReference>
<dbReference type="GO" id="GO:0008137">
    <property type="term" value="F:NADH dehydrogenase (ubiquinone) activity"/>
    <property type="evidence" value="ECO:0007669"/>
    <property type="project" value="InterPro"/>
</dbReference>
<dbReference type="GO" id="GO:0050136">
    <property type="term" value="F:NADH:ubiquinone reductase (non-electrogenic) activity"/>
    <property type="evidence" value="ECO:0007669"/>
    <property type="project" value="UniProtKB-UniRule"/>
</dbReference>
<dbReference type="GO" id="GO:0048038">
    <property type="term" value="F:quinone binding"/>
    <property type="evidence" value="ECO:0007669"/>
    <property type="project" value="UniProtKB-KW"/>
</dbReference>
<dbReference type="Gene3D" id="3.30.460.80">
    <property type="entry name" value="NADH:ubiquinone oxidoreductase, 30kDa subunit"/>
    <property type="match status" value="1"/>
</dbReference>
<dbReference type="HAMAP" id="MF_01357">
    <property type="entry name" value="NDH1_NuoC"/>
    <property type="match status" value="1"/>
</dbReference>
<dbReference type="InterPro" id="IPR010218">
    <property type="entry name" value="NADH_DH_suC"/>
</dbReference>
<dbReference type="InterPro" id="IPR037232">
    <property type="entry name" value="NADH_quin_OxRdtase_su_C/D-like"/>
</dbReference>
<dbReference type="InterPro" id="IPR001268">
    <property type="entry name" value="NADH_UbQ_OxRdtase_30kDa_su"/>
</dbReference>
<dbReference type="InterPro" id="IPR020396">
    <property type="entry name" value="NADH_UbQ_OxRdtase_CS"/>
</dbReference>
<dbReference type="NCBIfam" id="TIGR01961">
    <property type="entry name" value="NuoC_fam"/>
    <property type="match status" value="1"/>
</dbReference>
<dbReference type="NCBIfam" id="NF004733">
    <property type="entry name" value="PRK06074.1-5"/>
    <property type="match status" value="1"/>
</dbReference>
<dbReference type="PANTHER" id="PTHR10884:SF14">
    <property type="entry name" value="NADH DEHYDROGENASE [UBIQUINONE] IRON-SULFUR PROTEIN 3, MITOCHONDRIAL"/>
    <property type="match status" value="1"/>
</dbReference>
<dbReference type="PANTHER" id="PTHR10884">
    <property type="entry name" value="NADH DEHYDROGENASE UBIQUINONE IRON-SULFUR PROTEIN 3"/>
    <property type="match status" value="1"/>
</dbReference>
<dbReference type="Pfam" id="PF00329">
    <property type="entry name" value="Complex1_30kDa"/>
    <property type="match status" value="1"/>
</dbReference>
<dbReference type="SUPFAM" id="SSF143243">
    <property type="entry name" value="Nqo5-like"/>
    <property type="match status" value="1"/>
</dbReference>
<dbReference type="PROSITE" id="PS00542">
    <property type="entry name" value="COMPLEX1_30K"/>
    <property type="match status" value="1"/>
</dbReference>
<reference key="1">
    <citation type="journal article" date="2010" name="Appl. Environ. Microbiol.">
        <title>Conserved symbiotic plasmid DNA sequences in the multireplicon pangenomic structure of Rhizobium etli.</title>
        <authorList>
            <person name="Gonzalez V."/>
            <person name="Acosta J.L."/>
            <person name="Santamaria R.I."/>
            <person name="Bustos P."/>
            <person name="Fernandez J.L."/>
            <person name="Hernandez Gonzalez I.L."/>
            <person name="Diaz R."/>
            <person name="Flores M."/>
            <person name="Palacios R."/>
            <person name="Mora J."/>
            <person name="Davila G."/>
        </authorList>
    </citation>
    <scope>NUCLEOTIDE SEQUENCE [LARGE SCALE GENOMIC DNA]</scope>
    <source>
        <strain>CIAT 652</strain>
    </source>
</reference>
<keyword id="KW-0997">Cell inner membrane</keyword>
<keyword id="KW-1003">Cell membrane</keyword>
<keyword id="KW-0472">Membrane</keyword>
<keyword id="KW-0520">NAD</keyword>
<keyword id="KW-0874">Quinone</keyword>
<keyword id="KW-1278">Translocase</keyword>
<keyword id="KW-0813">Transport</keyword>
<keyword id="KW-0830">Ubiquinone</keyword>
<name>NUOC1_RHIE6</name>
<protein>
    <recommendedName>
        <fullName evidence="1">NADH-quinone oxidoreductase subunit C 1</fullName>
        <ecNumber evidence="1">7.1.1.-</ecNumber>
    </recommendedName>
    <alternativeName>
        <fullName evidence="1">NADH dehydrogenase I subunit C 1</fullName>
    </alternativeName>
    <alternativeName>
        <fullName evidence="1">NDH-1 subunit C 1</fullName>
    </alternativeName>
</protein>
<accession>B3PVZ9</accession>
<sequence>MSEALTELASYLGEARGNLIAASQLKYGELTLTATGENLIPLLTFLRDDAKCGFVNLIDICGVDWPQRELRFDVVYHLLSPKKNLRIRVKVATDEDTPVPSACGLYPGADWFERETWDMYGVLFTGHPDLRRILTDYGFEGHPLRKDFPTTGFVEVRYDDAAKRVVYEPVELKQEFRNFDFMSPWEGTEYVLPGDEKAKQ</sequence>
<proteinExistence type="inferred from homology"/>
<feature type="chain" id="PRO_0000358179" description="NADH-quinone oxidoreductase subunit C 1">
    <location>
        <begin position="1"/>
        <end position="200"/>
    </location>
</feature>
<evidence type="ECO:0000255" key="1">
    <source>
        <dbReference type="HAMAP-Rule" id="MF_01357"/>
    </source>
</evidence>
<comment type="function">
    <text evidence="1">NDH-1 shuttles electrons from NADH, via FMN and iron-sulfur (Fe-S) centers, to quinones in the respiratory chain. The immediate electron acceptor for the enzyme in this species is believed to be ubiquinone. Couples the redox reaction to proton translocation (for every two electrons transferred, four hydrogen ions are translocated across the cytoplasmic membrane), and thus conserves the redox energy in a proton gradient.</text>
</comment>
<comment type="catalytic activity">
    <reaction evidence="1">
        <text>a quinone + NADH + 5 H(+)(in) = a quinol + NAD(+) + 4 H(+)(out)</text>
        <dbReference type="Rhea" id="RHEA:57888"/>
        <dbReference type="ChEBI" id="CHEBI:15378"/>
        <dbReference type="ChEBI" id="CHEBI:24646"/>
        <dbReference type="ChEBI" id="CHEBI:57540"/>
        <dbReference type="ChEBI" id="CHEBI:57945"/>
        <dbReference type="ChEBI" id="CHEBI:132124"/>
    </reaction>
</comment>
<comment type="subunit">
    <text evidence="1">NDH-1 is composed of 14 different subunits. Subunits NuoB, C, D, E, F, and G constitute the peripheral sector of the complex.</text>
</comment>
<comment type="subcellular location">
    <subcellularLocation>
        <location evidence="1">Cell inner membrane</location>
        <topology evidence="1">Peripheral membrane protein</topology>
        <orientation evidence="1">Cytoplasmic side</orientation>
    </subcellularLocation>
</comment>
<comment type="similarity">
    <text evidence="1">Belongs to the complex I 30 kDa subunit family.</text>
</comment>